<keyword id="KW-0067">ATP-binding</keyword>
<keyword id="KW-0997">Cell inner membrane</keyword>
<keyword id="KW-1003">Cell membrane</keyword>
<keyword id="KW-0472">Membrane</keyword>
<keyword id="KW-0547">Nucleotide-binding</keyword>
<keyword id="KW-1185">Reference proteome</keyword>
<keyword id="KW-0677">Repeat</keyword>
<keyword id="KW-0762">Sugar transport</keyword>
<keyword id="KW-1278">Translocase</keyword>
<keyword id="KW-0813">Transport</keyword>
<organism>
    <name type="scientific">Rhizobium etli (strain ATCC 51251 / DSM 11541 / JCM 21823 / NBRC 15573 / CFN 42)</name>
    <dbReference type="NCBI Taxonomy" id="347834"/>
    <lineage>
        <taxon>Bacteria</taxon>
        <taxon>Pseudomonadati</taxon>
        <taxon>Pseudomonadota</taxon>
        <taxon>Alphaproteobacteria</taxon>
        <taxon>Hyphomicrobiales</taxon>
        <taxon>Rhizobiaceae</taxon>
        <taxon>Rhizobium/Agrobacterium group</taxon>
        <taxon>Rhizobium</taxon>
    </lineage>
</organism>
<gene>
    <name evidence="1" type="primary">rbsA1</name>
    <name type="synonym">rbsAch2</name>
    <name type="ordered locus">RHE_CH01788</name>
</gene>
<comment type="function">
    <text evidence="1">Part of the ABC transporter complex RbsABC involved in ribose import. Responsible for energy coupling to the transport system.</text>
</comment>
<comment type="catalytic activity">
    <reaction evidence="1">
        <text>D-ribose(out) + ATP + H2O = D-ribose(in) + ADP + phosphate + H(+)</text>
        <dbReference type="Rhea" id="RHEA:29903"/>
        <dbReference type="ChEBI" id="CHEBI:15377"/>
        <dbReference type="ChEBI" id="CHEBI:15378"/>
        <dbReference type="ChEBI" id="CHEBI:30616"/>
        <dbReference type="ChEBI" id="CHEBI:43474"/>
        <dbReference type="ChEBI" id="CHEBI:47013"/>
        <dbReference type="ChEBI" id="CHEBI:456216"/>
        <dbReference type="EC" id="7.5.2.7"/>
    </reaction>
</comment>
<comment type="subunit">
    <text evidence="1">The complex is composed of an ATP-binding protein (RbsA), two transmembrane proteins (RbsC) and a solute-binding protein (RbsB).</text>
</comment>
<comment type="subcellular location">
    <subcellularLocation>
        <location evidence="1">Cell inner membrane</location>
        <topology evidence="1">Peripheral membrane protein</topology>
    </subcellularLocation>
</comment>
<comment type="similarity">
    <text evidence="1">Belongs to the ABC transporter superfamily. Ribose importer (TC 3.A.1.2.1) family.</text>
</comment>
<accession>Q2K9A3</accession>
<feature type="chain" id="PRO_0000261080" description="Ribose import ATP-binding protein RbsA 1">
    <location>
        <begin position="1"/>
        <end position="512"/>
    </location>
</feature>
<feature type="domain" description="ABC transporter 1" evidence="1">
    <location>
        <begin position="8"/>
        <end position="244"/>
    </location>
</feature>
<feature type="domain" description="ABC transporter 2" evidence="1">
    <location>
        <begin position="257"/>
        <end position="502"/>
    </location>
</feature>
<feature type="binding site" evidence="1">
    <location>
        <begin position="40"/>
        <end position="47"/>
    </location>
    <ligand>
        <name>ATP</name>
        <dbReference type="ChEBI" id="CHEBI:30616"/>
    </ligand>
</feature>
<dbReference type="EC" id="7.5.2.7" evidence="1"/>
<dbReference type="EMBL" id="CP000133">
    <property type="protein sequence ID" value="ABC90583.1"/>
    <property type="molecule type" value="Genomic_DNA"/>
</dbReference>
<dbReference type="RefSeq" id="WP_011425080.1">
    <property type="nucleotide sequence ID" value="NC_007761.1"/>
</dbReference>
<dbReference type="SMR" id="Q2K9A3"/>
<dbReference type="KEGG" id="ret:RHE_CH01788"/>
<dbReference type="eggNOG" id="COG1129">
    <property type="taxonomic scope" value="Bacteria"/>
</dbReference>
<dbReference type="HOGENOM" id="CLU_000604_92_2_5"/>
<dbReference type="OrthoDB" id="9805029at2"/>
<dbReference type="Proteomes" id="UP000001936">
    <property type="component" value="Chromosome"/>
</dbReference>
<dbReference type="GO" id="GO:0005886">
    <property type="term" value="C:plasma membrane"/>
    <property type="evidence" value="ECO:0007669"/>
    <property type="project" value="UniProtKB-SubCell"/>
</dbReference>
<dbReference type="GO" id="GO:0015611">
    <property type="term" value="F:ABC-type D-ribose transporter activity"/>
    <property type="evidence" value="ECO:0007669"/>
    <property type="project" value="UniProtKB-EC"/>
</dbReference>
<dbReference type="GO" id="GO:0005524">
    <property type="term" value="F:ATP binding"/>
    <property type="evidence" value="ECO:0007669"/>
    <property type="project" value="UniProtKB-KW"/>
</dbReference>
<dbReference type="GO" id="GO:0016887">
    <property type="term" value="F:ATP hydrolysis activity"/>
    <property type="evidence" value="ECO:0007669"/>
    <property type="project" value="InterPro"/>
</dbReference>
<dbReference type="CDD" id="cd03216">
    <property type="entry name" value="ABC_Carb_Monos_I"/>
    <property type="match status" value="1"/>
</dbReference>
<dbReference type="CDD" id="cd03215">
    <property type="entry name" value="ABC_Carb_Monos_II"/>
    <property type="match status" value="1"/>
</dbReference>
<dbReference type="Gene3D" id="3.40.50.300">
    <property type="entry name" value="P-loop containing nucleotide triphosphate hydrolases"/>
    <property type="match status" value="2"/>
</dbReference>
<dbReference type="InterPro" id="IPR003593">
    <property type="entry name" value="AAA+_ATPase"/>
</dbReference>
<dbReference type="InterPro" id="IPR050107">
    <property type="entry name" value="ABC_carbohydrate_import_ATPase"/>
</dbReference>
<dbReference type="InterPro" id="IPR003439">
    <property type="entry name" value="ABC_transporter-like_ATP-bd"/>
</dbReference>
<dbReference type="InterPro" id="IPR017871">
    <property type="entry name" value="ABC_transporter-like_CS"/>
</dbReference>
<dbReference type="InterPro" id="IPR027417">
    <property type="entry name" value="P-loop_NTPase"/>
</dbReference>
<dbReference type="PANTHER" id="PTHR43790">
    <property type="entry name" value="CARBOHYDRATE TRANSPORT ATP-BINDING PROTEIN MG119-RELATED"/>
    <property type="match status" value="1"/>
</dbReference>
<dbReference type="PANTHER" id="PTHR43790:SF9">
    <property type="entry name" value="GALACTOFURANOSE TRANSPORTER ATP-BINDING PROTEIN YTFR"/>
    <property type="match status" value="1"/>
</dbReference>
<dbReference type="Pfam" id="PF00005">
    <property type="entry name" value="ABC_tran"/>
    <property type="match status" value="2"/>
</dbReference>
<dbReference type="SMART" id="SM00382">
    <property type="entry name" value="AAA"/>
    <property type="match status" value="1"/>
</dbReference>
<dbReference type="SUPFAM" id="SSF52540">
    <property type="entry name" value="P-loop containing nucleoside triphosphate hydrolases"/>
    <property type="match status" value="2"/>
</dbReference>
<dbReference type="PROSITE" id="PS00211">
    <property type="entry name" value="ABC_TRANSPORTER_1"/>
    <property type="match status" value="1"/>
</dbReference>
<dbReference type="PROSITE" id="PS50893">
    <property type="entry name" value="ABC_TRANSPORTER_2"/>
    <property type="match status" value="2"/>
</dbReference>
<dbReference type="PROSITE" id="PS51254">
    <property type="entry name" value="RBSA"/>
    <property type="match status" value="1"/>
</dbReference>
<name>RBSA1_RHIEC</name>
<evidence type="ECO:0000255" key="1">
    <source>
        <dbReference type="HAMAP-Rule" id="MF_01716"/>
    </source>
</evidence>
<proteinExistence type="inferred from homology"/>
<sequence length="512" mass="56002">MSLSEPIFRMEGISKRYGGAIALKDADIAIRRGAIHAVLGENGAGKSTLIKIMAGVVTPDEGRMLLDGREIAFASPAAANAVGIVCVFQELSLIPDLSVADNITISHPPQRFGMIDRRAQRRIAEEALTRAGASDIHPSILVKDLPLSRRQMVEIAKALARKPRLIILDEATSALTRSDVEKVFAVLKRLRAEGMALIYISHRMHEIAQLADDCTVFRNGRSIESYPAGTKTDQQVVELMIGREYNNVFPPKPAHRPEEKPILSCRELSWGDRLSGITFDIRPGEVVGLGGLDGQGQRDLLLAFFGVLRDLKGEIAIDGTQVKLRSPRHAKSGGISMALIPEDRKTEGLMLPMTVRENLSIAALDRISRNGVIDRAAERREIDDLFKLLAIKAATIDMPVAGLSGGNQQKVVIAKWLMNRPRIILLNDPTRGIDVGTKQEIYLLLRKLADGGAAIIFYSTDYDELIGCCDRVLVMYDGSIVRELEGADINEHELIGAALNIGGEHAQQRIAP</sequence>
<reference key="1">
    <citation type="journal article" date="2006" name="Proc. Natl. Acad. Sci. U.S.A.">
        <title>The partitioned Rhizobium etli genome: genetic and metabolic redundancy in seven interacting replicons.</title>
        <authorList>
            <person name="Gonzalez V."/>
            <person name="Santamaria R.I."/>
            <person name="Bustos P."/>
            <person name="Hernandez-Gonzalez I."/>
            <person name="Medrano-Soto A."/>
            <person name="Moreno-Hagelsieb G."/>
            <person name="Janga S.C."/>
            <person name="Ramirez M.A."/>
            <person name="Jimenez-Jacinto V."/>
            <person name="Collado-Vides J."/>
            <person name="Davila G."/>
        </authorList>
    </citation>
    <scope>NUCLEOTIDE SEQUENCE [LARGE SCALE GENOMIC DNA]</scope>
    <source>
        <strain>ATCC 51251 / DSM 11541 / JCM 21823 / NBRC 15573 / CFN 42</strain>
    </source>
</reference>
<protein>
    <recommendedName>
        <fullName evidence="1">Ribose import ATP-binding protein RbsA 1</fullName>
        <ecNumber evidence="1">7.5.2.7</ecNumber>
    </recommendedName>
</protein>